<name>ARGE_ECOL6</name>
<comment type="function">
    <text evidence="1">Catalyzes the hydrolysis of the amide bond of N(2)-acetylated L-amino acids. Cleaves the acetyl group from N-acetyl-L-ornithine to form L-ornithine, an intermediate in L-arginine biosynthesis pathway, and a branchpoint in the synthesis of polyamines.</text>
</comment>
<comment type="catalytic activity">
    <reaction evidence="1">
        <text>N(2)-acetyl-L-ornithine + H2O = L-ornithine + acetate</text>
        <dbReference type="Rhea" id="RHEA:15941"/>
        <dbReference type="ChEBI" id="CHEBI:15377"/>
        <dbReference type="ChEBI" id="CHEBI:30089"/>
        <dbReference type="ChEBI" id="CHEBI:46911"/>
        <dbReference type="ChEBI" id="CHEBI:57805"/>
        <dbReference type="EC" id="3.5.1.16"/>
    </reaction>
</comment>
<comment type="cofactor">
    <cofactor evidence="1">
        <name>Zn(2+)</name>
        <dbReference type="ChEBI" id="CHEBI:29105"/>
    </cofactor>
    <cofactor evidence="1">
        <name>Co(2+)</name>
        <dbReference type="ChEBI" id="CHEBI:48828"/>
    </cofactor>
    <text evidence="1">Binds 2 Zn(2+) or Co(2+) ions per subunit.</text>
</comment>
<comment type="cofactor">
    <cofactor evidence="1">
        <name>glutathione</name>
        <dbReference type="ChEBI" id="CHEBI:57925"/>
    </cofactor>
</comment>
<comment type="pathway">
    <text evidence="1">Amino-acid biosynthesis; L-arginine biosynthesis; L-ornithine from N(2)-acetyl-L-ornithine (linear): step 1/1.</text>
</comment>
<comment type="subunit">
    <text evidence="1">Homodimer.</text>
</comment>
<comment type="subcellular location">
    <subcellularLocation>
        <location evidence="1">Cytoplasm</location>
    </subcellularLocation>
</comment>
<comment type="similarity">
    <text evidence="1 2">Belongs to the peptidase M20A family. ArgE subfamily.</text>
</comment>
<comment type="sequence caution" evidence="2">
    <conflict type="erroneous initiation">
        <sequence resource="EMBL-CDS" id="AAN83344"/>
    </conflict>
</comment>
<evidence type="ECO:0000255" key="1">
    <source>
        <dbReference type="HAMAP-Rule" id="MF_01108"/>
    </source>
</evidence>
<evidence type="ECO:0000305" key="2"/>
<dbReference type="EC" id="3.5.1.16" evidence="1"/>
<dbReference type="EMBL" id="AE014075">
    <property type="protein sequence ID" value="AAN83344.1"/>
    <property type="status" value="ALT_INIT"/>
    <property type="molecule type" value="Genomic_DNA"/>
</dbReference>
<dbReference type="RefSeq" id="WP_001298411.1">
    <property type="nucleotide sequence ID" value="NZ_CP051263.1"/>
</dbReference>
<dbReference type="SMR" id="Q8FB97"/>
<dbReference type="STRING" id="199310.c4916"/>
<dbReference type="MEROPS" id="M20.974"/>
<dbReference type="KEGG" id="ecc:c4916"/>
<dbReference type="eggNOG" id="COG0624">
    <property type="taxonomic scope" value="Bacteria"/>
</dbReference>
<dbReference type="HOGENOM" id="CLU_021802_2_4_6"/>
<dbReference type="UniPathway" id="UPA00068">
    <property type="reaction ID" value="UER00110"/>
</dbReference>
<dbReference type="Proteomes" id="UP000001410">
    <property type="component" value="Chromosome"/>
</dbReference>
<dbReference type="GO" id="GO:0005737">
    <property type="term" value="C:cytoplasm"/>
    <property type="evidence" value="ECO:0007669"/>
    <property type="project" value="UniProtKB-SubCell"/>
</dbReference>
<dbReference type="GO" id="GO:0008777">
    <property type="term" value="F:acetylornithine deacetylase activity"/>
    <property type="evidence" value="ECO:0007669"/>
    <property type="project" value="UniProtKB-UniRule"/>
</dbReference>
<dbReference type="GO" id="GO:0008270">
    <property type="term" value="F:zinc ion binding"/>
    <property type="evidence" value="ECO:0007669"/>
    <property type="project" value="UniProtKB-UniRule"/>
</dbReference>
<dbReference type="GO" id="GO:0006526">
    <property type="term" value="P:L-arginine biosynthetic process"/>
    <property type="evidence" value="ECO:0007669"/>
    <property type="project" value="UniProtKB-UniRule"/>
</dbReference>
<dbReference type="CDD" id="cd03894">
    <property type="entry name" value="M20_ArgE"/>
    <property type="match status" value="1"/>
</dbReference>
<dbReference type="FunFam" id="3.30.70.360:FF:000003">
    <property type="entry name" value="Acetylornithine deacetylase"/>
    <property type="match status" value="1"/>
</dbReference>
<dbReference type="Gene3D" id="3.30.70.360">
    <property type="match status" value="1"/>
</dbReference>
<dbReference type="Gene3D" id="3.40.630.10">
    <property type="entry name" value="Zn peptidases"/>
    <property type="match status" value="1"/>
</dbReference>
<dbReference type="HAMAP" id="MF_01108">
    <property type="entry name" value="ArgE"/>
    <property type="match status" value="1"/>
</dbReference>
<dbReference type="InterPro" id="IPR010169">
    <property type="entry name" value="AcOrn-deacetyl"/>
</dbReference>
<dbReference type="InterPro" id="IPR001261">
    <property type="entry name" value="ArgE/DapE_CS"/>
</dbReference>
<dbReference type="InterPro" id="IPR036264">
    <property type="entry name" value="Bact_exopeptidase_dim_dom"/>
</dbReference>
<dbReference type="InterPro" id="IPR002933">
    <property type="entry name" value="Peptidase_M20"/>
</dbReference>
<dbReference type="InterPro" id="IPR011650">
    <property type="entry name" value="Peptidase_M20_dimer"/>
</dbReference>
<dbReference type="InterPro" id="IPR050072">
    <property type="entry name" value="Peptidase_M20A"/>
</dbReference>
<dbReference type="NCBIfam" id="TIGR01892">
    <property type="entry name" value="AcOrn-deacetyl"/>
    <property type="match status" value="1"/>
</dbReference>
<dbReference type="NCBIfam" id="NF003474">
    <property type="entry name" value="PRK05111.1"/>
    <property type="match status" value="1"/>
</dbReference>
<dbReference type="PANTHER" id="PTHR43808">
    <property type="entry name" value="ACETYLORNITHINE DEACETYLASE"/>
    <property type="match status" value="1"/>
</dbReference>
<dbReference type="PANTHER" id="PTHR43808:SF1">
    <property type="entry name" value="ACETYLORNITHINE DEACETYLASE"/>
    <property type="match status" value="1"/>
</dbReference>
<dbReference type="Pfam" id="PF07687">
    <property type="entry name" value="M20_dimer"/>
    <property type="match status" value="1"/>
</dbReference>
<dbReference type="Pfam" id="PF01546">
    <property type="entry name" value="Peptidase_M20"/>
    <property type="match status" value="1"/>
</dbReference>
<dbReference type="SUPFAM" id="SSF55031">
    <property type="entry name" value="Bacterial exopeptidase dimerisation domain"/>
    <property type="match status" value="1"/>
</dbReference>
<dbReference type="SUPFAM" id="SSF53187">
    <property type="entry name" value="Zn-dependent exopeptidases"/>
    <property type="match status" value="1"/>
</dbReference>
<dbReference type="PROSITE" id="PS00758">
    <property type="entry name" value="ARGE_DAPE_CPG2_1"/>
    <property type="match status" value="1"/>
</dbReference>
<dbReference type="PROSITE" id="PS00759">
    <property type="entry name" value="ARGE_DAPE_CPG2_2"/>
    <property type="match status" value="1"/>
</dbReference>
<feature type="chain" id="PRO_0000185242" description="Acetylornithine deacetylase">
    <location>
        <begin position="1"/>
        <end position="383"/>
    </location>
</feature>
<feature type="active site" evidence="1">
    <location>
        <position position="82"/>
    </location>
</feature>
<feature type="active site" evidence="1">
    <location>
        <position position="144"/>
    </location>
</feature>
<feature type="binding site" evidence="1">
    <location>
        <position position="80"/>
    </location>
    <ligand>
        <name>Zn(2+)</name>
        <dbReference type="ChEBI" id="CHEBI:29105"/>
        <label>1</label>
    </ligand>
</feature>
<feature type="binding site" evidence="1">
    <location>
        <position position="112"/>
    </location>
    <ligand>
        <name>Zn(2+)</name>
        <dbReference type="ChEBI" id="CHEBI:29105"/>
        <label>1</label>
    </ligand>
</feature>
<feature type="binding site" evidence="1">
    <location>
        <position position="112"/>
    </location>
    <ligand>
        <name>Zn(2+)</name>
        <dbReference type="ChEBI" id="CHEBI:29105"/>
        <label>2</label>
    </ligand>
</feature>
<feature type="binding site" evidence="1">
    <location>
        <position position="145"/>
    </location>
    <ligand>
        <name>Zn(2+)</name>
        <dbReference type="ChEBI" id="CHEBI:29105"/>
        <label>2</label>
    </ligand>
</feature>
<feature type="binding site" evidence="1">
    <location>
        <position position="169"/>
    </location>
    <ligand>
        <name>Zn(2+)</name>
        <dbReference type="ChEBI" id="CHEBI:29105"/>
        <label>1</label>
    </ligand>
</feature>
<feature type="binding site" evidence="1">
    <location>
        <position position="355"/>
    </location>
    <ligand>
        <name>Zn(2+)</name>
        <dbReference type="ChEBI" id="CHEBI:29105"/>
        <label>2</label>
    </ligand>
</feature>
<keyword id="KW-0028">Amino-acid biosynthesis</keyword>
<keyword id="KW-0055">Arginine biosynthesis</keyword>
<keyword id="KW-0170">Cobalt</keyword>
<keyword id="KW-0963">Cytoplasm</keyword>
<keyword id="KW-0378">Hydrolase</keyword>
<keyword id="KW-0479">Metal-binding</keyword>
<keyword id="KW-1185">Reference proteome</keyword>
<keyword id="KW-0862">Zinc</keyword>
<proteinExistence type="inferred from homology"/>
<gene>
    <name evidence="1" type="primary">argE</name>
    <name type="ordered locus">c4916</name>
</gene>
<organism>
    <name type="scientific">Escherichia coli O6:H1 (strain CFT073 / ATCC 700928 / UPEC)</name>
    <dbReference type="NCBI Taxonomy" id="199310"/>
    <lineage>
        <taxon>Bacteria</taxon>
        <taxon>Pseudomonadati</taxon>
        <taxon>Pseudomonadota</taxon>
        <taxon>Gammaproteobacteria</taxon>
        <taxon>Enterobacterales</taxon>
        <taxon>Enterobacteriaceae</taxon>
        <taxon>Escherichia</taxon>
    </lineage>
</organism>
<protein>
    <recommendedName>
        <fullName evidence="1">Acetylornithine deacetylase</fullName>
        <shortName evidence="1">AO</shortName>
        <shortName evidence="1">Acetylornithinase</shortName>
        <ecNumber evidence="1">3.5.1.16</ecNumber>
    </recommendedName>
    <alternativeName>
        <fullName evidence="1">N-acetylornithinase</fullName>
        <shortName evidence="1">NAO</shortName>
    </alternativeName>
</protein>
<reference key="1">
    <citation type="journal article" date="2002" name="Proc. Natl. Acad. Sci. U.S.A.">
        <title>Extensive mosaic structure revealed by the complete genome sequence of uropathogenic Escherichia coli.</title>
        <authorList>
            <person name="Welch R.A."/>
            <person name="Burland V."/>
            <person name="Plunkett G. III"/>
            <person name="Redford P."/>
            <person name="Roesch P."/>
            <person name="Rasko D."/>
            <person name="Buckles E.L."/>
            <person name="Liou S.-R."/>
            <person name="Boutin A."/>
            <person name="Hackett J."/>
            <person name="Stroud D."/>
            <person name="Mayhew G.F."/>
            <person name="Rose D.J."/>
            <person name="Zhou S."/>
            <person name="Schwartz D.C."/>
            <person name="Perna N.T."/>
            <person name="Mobley H.L.T."/>
            <person name="Donnenberg M.S."/>
            <person name="Blattner F.R."/>
        </authorList>
    </citation>
    <scope>NUCLEOTIDE SEQUENCE [LARGE SCALE GENOMIC DNA]</scope>
    <source>
        <strain>CFT073 / ATCC 700928 / UPEC</strain>
    </source>
</reference>
<accession>Q8FB97</accession>
<sequence>MKNKLPPFIEIYRALIATPSISATEEALDQSNADLITLLADWFKDLGFNVEVQPVPGTRNKFNMLASCGQGAGGLLLAGHTDTVPFDDGRWTRDPFTLTEHDGKLYGLGTADMKGFFAFILDALRDVDVTKLAKPLYILATADEETSMAGARYFAETTALRPDCAIIGEPTSLQPVRAHKGHISNAIRIQGQSGHSSDPARGVNAIELMHDAIGHILQLRDNLKERYHYDAFTVPYPTLNLGHIHGGDASNRICACCELHMDIRPLPGMTLNELNGLLNDALAPVSERWPGRLTVDELHPPIPGYECPPNHQLVEVVEKLLGAKTEVVNYCTEAPFIQTLCPTLVLGPGSINQAHQPDEYLETRFIKPTRELITQVIHHFCWH</sequence>